<evidence type="ECO:0000255" key="1">
    <source>
        <dbReference type="HAMAP-Rule" id="MF_00377"/>
    </source>
</evidence>
<evidence type="ECO:0000256" key="2">
    <source>
        <dbReference type="SAM" id="MobiDB-lite"/>
    </source>
</evidence>
<name>DNAA_CHLTE</name>
<proteinExistence type="inferred from homology"/>
<protein>
    <recommendedName>
        <fullName evidence="1">Chromosomal replication initiator protein DnaA</fullName>
    </recommendedName>
</protein>
<comment type="function">
    <text evidence="1">Plays an essential role in the initiation and regulation of chromosomal replication. ATP-DnaA binds to the origin of replication (oriC) to initiate formation of the DNA replication initiation complex once per cell cycle. Binds the DnaA box (a 9 base pair repeat at the origin) and separates the double-stranded (ds)DNA. Forms a right-handed helical filament on oriC DNA; dsDNA binds to the exterior of the filament while single-stranded (ss)DNA is stabiized in the filament's interior. The ATP-DnaA-oriC complex binds and stabilizes one strand of the AT-rich DNA unwinding element (DUE), permitting loading of DNA polymerase. After initiation quickly degrades to an ADP-DnaA complex that is not apt for DNA replication. Binds acidic phospholipids.</text>
</comment>
<comment type="subunit">
    <text evidence="1">Oligomerizes as a right-handed, spiral filament on DNA at oriC.</text>
</comment>
<comment type="subcellular location">
    <subcellularLocation>
        <location evidence="1">Cytoplasm</location>
    </subcellularLocation>
</comment>
<comment type="domain">
    <text evidence="1">Domain I is involved in oligomerization and binding regulators, domain II is flexibile and of varying length in different bacteria, domain III forms the AAA+ region, while domain IV binds dsDNA.</text>
</comment>
<comment type="similarity">
    <text evidence="1">Belongs to the DnaA family.</text>
</comment>
<dbReference type="EMBL" id="AE006470">
    <property type="protein sequence ID" value="AAM71250.1"/>
    <property type="molecule type" value="Genomic_DNA"/>
</dbReference>
<dbReference type="RefSeq" id="NP_660908.1">
    <property type="nucleotide sequence ID" value="NC_002932.3"/>
</dbReference>
<dbReference type="RefSeq" id="WP_010931696.1">
    <property type="nucleotide sequence ID" value="NC_002932.3"/>
</dbReference>
<dbReference type="SMR" id="Q8KGG6"/>
<dbReference type="STRING" id="194439.CT0002"/>
<dbReference type="EnsemblBacteria" id="AAM71250">
    <property type="protein sequence ID" value="AAM71250"/>
    <property type="gene ID" value="CT0002"/>
</dbReference>
<dbReference type="KEGG" id="cte:CT0002"/>
<dbReference type="PATRIC" id="fig|194439.7.peg.2"/>
<dbReference type="eggNOG" id="COG0593">
    <property type="taxonomic scope" value="Bacteria"/>
</dbReference>
<dbReference type="HOGENOM" id="CLU_026910_3_1_10"/>
<dbReference type="OrthoDB" id="9807019at2"/>
<dbReference type="Proteomes" id="UP000001007">
    <property type="component" value="Chromosome"/>
</dbReference>
<dbReference type="GO" id="GO:0005737">
    <property type="term" value="C:cytoplasm"/>
    <property type="evidence" value="ECO:0007669"/>
    <property type="project" value="UniProtKB-SubCell"/>
</dbReference>
<dbReference type="GO" id="GO:0005886">
    <property type="term" value="C:plasma membrane"/>
    <property type="evidence" value="ECO:0007669"/>
    <property type="project" value="TreeGrafter"/>
</dbReference>
<dbReference type="GO" id="GO:0005524">
    <property type="term" value="F:ATP binding"/>
    <property type="evidence" value="ECO:0007669"/>
    <property type="project" value="UniProtKB-UniRule"/>
</dbReference>
<dbReference type="GO" id="GO:0016887">
    <property type="term" value="F:ATP hydrolysis activity"/>
    <property type="evidence" value="ECO:0007669"/>
    <property type="project" value="InterPro"/>
</dbReference>
<dbReference type="GO" id="GO:0003688">
    <property type="term" value="F:DNA replication origin binding"/>
    <property type="evidence" value="ECO:0007669"/>
    <property type="project" value="UniProtKB-UniRule"/>
</dbReference>
<dbReference type="GO" id="GO:0008289">
    <property type="term" value="F:lipid binding"/>
    <property type="evidence" value="ECO:0007669"/>
    <property type="project" value="UniProtKB-KW"/>
</dbReference>
<dbReference type="GO" id="GO:0006270">
    <property type="term" value="P:DNA replication initiation"/>
    <property type="evidence" value="ECO:0007669"/>
    <property type="project" value="UniProtKB-UniRule"/>
</dbReference>
<dbReference type="GO" id="GO:0006275">
    <property type="term" value="P:regulation of DNA replication"/>
    <property type="evidence" value="ECO:0007669"/>
    <property type="project" value="UniProtKB-UniRule"/>
</dbReference>
<dbReference type="CDD" id="cd00009">
    <property type="entry name" value="AAA"/>
    <property type="match status" value="1"/>
</dbReference>
<dbReference type="CDD" id="cd06571">
    <property type="entry name" value="Bac_DnaA_C"/>
    <property type="match status" value="1"/>
</dbReference>
<dbReference type="FunFam" id="3.40.50.300:FF:000668">
    <property type="entry name" value="Chromosomal replication initiator protein DnaA"/>
    <property type="match status" value="1"/>
</dbReference>
<dbReference type="Gene3D" id="1.10.1750.10">
    <property type="match status" value="1"/>
</dbReference>
<dbReference type="Gene3D" id="1.10.8.60">
    <property type="match status" value="1"/>
</dbReference>
<dbReference type="Gene3D" id="3.30.300.180">
    <property type="match status" value="1"/>
</dbReference>
<dbReference type="Gene3D" id="3.40.50.300">
    <property type="entry name" value="P-loop containing nucleotide triphosphate hydrolases"/>
    <property type="match status" value="1"/>
</dbReference>
<dbReference type="HAMAP" id="MF_00377">
    <property type="entry name" value="DnaA_bact"/>
    <property type="match status" value="1"/>
</dbReference>
<dbReference type="InterPro" id="IPR003593">
    <property type="entry name" value="AAA+_ATPase"/>
</dbReference>
<dbReference type="InterPro" id="IPR001957">
    <property type="entry name" value="Chromosome_initiator_DnaA"/>
</dbReference>
<dbReference type="InterPro" id="IPR020591">
    <property type="entry name" value="Chromosome_initiator_DnaA-like"/>
</dbReference>
<dbReference type="InterPro" id="IPR018312">
    <property type="entry name" value="Chromosome_initiator_DnaA_CS"/>
</dbReference>
<dbReference type="InterPro" id="IPR013159">
    <property type="entry name" value="DnaA_C"/>
</dbReference>
<dbReference type="InterPro" id="IPR013317">
    <property type="entry name" value="DnaA_dom"/>
</dbReference>
<dbReference type="InterPro" id="IPR024633">
    <property type="entry name" value="DnaA_N_dom"/>
</dbReference>
<dbReference type="InterPro" id="IPR038454">
    <property type="entry name" value="DnaA_N_sf"/>
</dbReference>
<dbReference type="InterPro" id="IPR027417">
    <property type="entry name" value="P-loop_NTPase"/>
</dbReference>
<dbReference type="InterPro" id="IPR010921">
    <property type="entry name" value="Trp_repressor/repl_initiator"/>
</dbReference>
<dbReference type="NCBIfam" id="TIGR00362">
    <property type="entry name" value="DnaA"/>
    <property type="match status" value="1"/>
</dbReference>
<dbReference type="PANTHER" id="PTHR30050">
    <property type="entry name" value="CHROMOSOMAL REPLICATION INITIATOR PROTEIN DNAA"/>
    <property type="match status" value="1"/>
</dbReference>
<dbReference type="PANTHER" id="PTHR30050:SF2">
    <property type="entry name" value="CHROMOSOMAL REPLICATION INITIATOR PROTEIN DNAA"/>
    <property type="match status" value="1"/>
</dbReference>
<dbReference type="Pfam" id="PF00308">
    <property type="entry name" value="Bac_DnaA"/>
    <property type="match status" value="1"/>
</dbReference>
<dbReference type="Pfam" id="PF08299">
    <property type="entry name" value="Bac_DnaA_C"/>
    <property type="match status" value="1"/>
</dbReference>
<dbReference type="Pfam" id="PF11638">
    <property type="entry name" value="DnaA_N"/>
    <property type="match status" value="1"/>
</dbReference>
<dbReference type="PRINTS" id="PR00051">
    <property type="entry name" value="DNAA"/>
</dbReference>
<dbReference type="SMART" id="SM00382">
    <property type="entry name" value="AAA"/>
    <property type="match status" value="1"/>
</dbReference>
<dbReference type="SMART" id="SM00760">
    <property type="entry name" value="Bac_DnaA_C"/>
    <property type="match status" value="1"/>
</dbReference>
<dbReference type="SUPFAM" id="SSF52540">
    <property type="entry name" value="P-loop containing nucleoside triphosphate hydrolases"/>
    <property type="match status" value="1"/>
</dbReference>
<dbReference type="SUPFAM" id="SSF48295">
    <property type="entry name" value="TrpR-like"/>
    <property type="match status" value="1"/>
</dbReference>
<dbReference type="PROSITE" id="PS01008">
    <property type="entry name" value="DNAA"/>
    <property type="match status" value="1"/>
</dbReference>
<organism>
    <name type="scientific">Chlorobaculum tepidum (strain ATCC 49652 / DSM 12025 / NBRC 103806 / TLS)</name>
    <name type="common">Chlorobium tepidum</name>
    <dbReference type="NCBI Taxonomy" id="194439"/>
    <lineage>
        <taxon>Bacteria</taxon>
        <taxon>Pseudomonadati</taxon>
        <taxon>Chlorobiota</taxon>
        <taxon>Chlorobiia</taxon>
        <taxon>Chlorobiales</taxon>
        <taxon>Chlorobiaceae</taxon>
        <taxon>Chlorobaculum</taxon>
    </lineage>
</organism>
<reference key="1">
    <citation type="journal article" date="2002" name="Proc. Natl. Acad. Sci. U.S.A.">
        <title>The complete genome sequence of Chlorobium tepidum TLS, a photosynthetic, anaerobic, green-sulfur bacterium.</title>
        <authorList>
            <person name="Eisen J.A."/>
            <person name="Nelson K.E."/>
            <person name="Paulsen I.T."/>
            <person name="Heidelberg J.F."/>
            <person name="Wu M."/>
            <person name="Dodson R.J."/>
            <person name="DeBoy R.T."/>
            <person name="Gwinn M.L."/>
            <person name="Nelson W.C."/>
            <person name="Haft D.H."/>
            <person name="Hickey E.K."/>
            <person name="Peterson J.D."/>
            <person name="Durkin A.S."/>
            <person name="Kolonay J.F."/>
            <person name="Yang F."/>
            <person name="Holt I.E."/>
            <person name="Umayam L.A."/>
            <person name="Mason T.M."/>
            <person name="Brenner M."/>
            <person name="Shea T.P."/>
            <person name="Parksey D.S."/>
            <person name="Nierman W.C."/>
            <person name="Feldblyum T.V."/>
            <person name="Hansen C.L."/>
            <person name="Craven M.B."/>
            <person name="Radune D."/>
            <person name="Vamathevan J.J."/>
            <person name="Khouri H.M."/>
            <person name="White O."/>
            <person name="Gruber T.M."/>
            <person name="Ketchum K.A."/>
            <person name="Venter J.C."/>
            <person name="Tettelin H."/>
            <person name="Bryant D.A."/>
            <person name="Fraser C.M."/>
        </authorList>
    </citation>
    <scope>NUCLEOTIDE SEQUENCE [LARGE SCALE GENOMIC DNA]</scope>
    <source>
        <strain>ATCC 49652 / DSM 12025 / NBRC 103806 / TLS</strain>
    </source>
</reference>
<keyword id="KW-0067">ATP-binding</keyword>
<keyword id="KW-0963">Cytoplasm</keyword>
<keyword id="KW-0235">DNA replication</keyword>
<keyword id="KW-0238">DNA-binding</keyword>
<keyword id="KW-0446">Lipid-binding</keyword>
<keyword id="KW-0547">Nucleotide-binding</keyword>
<keyword id="KW-1185">Reference proteome</keyword>
<accession>Q8KGG6</accession>
<sequence>MSDTIQQEAPDNLQVTPTHGRSFAEKVWSACLGLIQENINTLAFKTWFLPIRPLSFSGSELTIEVPSQFFYEWIEENYSVHVKQALRQVIGPEAKLMYSIVIDKSQGQPVTIELPHQIDAAPAERSVRPEAPGQKASAERERLEIARPRFESNLNPKYTFSTLVRGDCNSLAFAASKSIAQNPGQNAFNPLVIYGGVGLGKTHMMQAIGNSVLENRITDAVLYVSSEKFAIDFVNAIQNGNIQEFSAFYRNIDVLIIDDIQFFAGKEKTQEEIFHIFNTLHQSNKQIILSADRPIKEIKGIEDRLISRFNWGLSTDIQAPDYETRKAIIQSKLKQSGVSLDPVVIEFIATNVTSNVRELEGCIVKLLAAHSLDNQEIDLQFAKSTLKDIIRYNTKQLTLETIEKAVCSYFSITSNDLKGKSKKKEIAVGRQIAMYLSKDMTDSSLKTIGLHFGGRDHSTVIHALNTIEKKIAASNEERKKIEELRKRIEIMSM</sequence>
<feature type="chain" id="PRO_0000114161" description="Chromosomal replication initiator protein DnaA">
    <location>
        <begin position="1"/>
        <end position="493"/>
    </location>
</feature>
<feature type="region of interest" description="Domain I, interacts with DnaA modulators" evidence="1">
    <location>
        <begin position="1"/>
        <end position="105"/>
    </location>
</feature>
<feature type="region of interest" description="Domain II" evidence="1">
    <location>
        <begin position="105"/>
        <end position="152"/>
    </location>
</feature>
<feature type="region of interest" description="Disordered" evidence="2">
    <location>
        <begin position="121"/>
        <end position="140"/>
    </location>
</feature>
<feature type="region of interest" description="Domain III, AAA+ region" evidence="1">
    <location>
        <begin position="153"/>
        <end position="370"/>
    </location>
</feature>
<feature type="region of interest" description="Domain IV, binds dsDNA" evidence="1">
    <location>
        <begin position="371"/>
        <end position="493"/>
    </location>
</feature>
<feature type="binding site" evidence="1">
    <location>
        <position position="198"/>
    </location>
    <ligand>
        <name>ATP</name>
        <dbReference type="ChEBI" id="CHEBI:30616"/>
    </ligand>
</feature>
<feature type="binding site" evidence="1">
    <location>
        <position position="200"/>
    </location>
    <ligand>
        <name>ATP</name>
        <dbReference type="ChEBI" id="CHEBI:30616"/>
    </ligand>
</feature>
<feature type="binding site" evidence="1">
    <location>
        <position position="201"/>
    </location>
    <ligand>
        <name>ATP</name>
        <dbReference type="ChEBI" id="CHEBI:30616"/>
    </ligand>
</feature>
<feature type="binding site" evidence="1">
    <location>
        <position position="202"/>
    </location>
    <ligand>
        <name>ATP</name>
        <dbReference type="ChEBI" id="CHEBI:30616"/>
    </ligand>
</feature>
<gene>
    <name evidence="1" type="primary">dnaA</name>
    <name type="ordered locus">CT0002</name>
</gene>